<comment type="PTM">
    <text evidence="1">Phosphorylated at C-terminal serines.</text>
</comment>
<sequence length="280" mass="30264">MPWRPPAHSVPGREGQFYAATFHAHAAFCGCGGFIEHLNSIHPRFLGAGGPPPPPPALRRALPAPEGPGGPPQHAPPNPPPEGDHQPPRRGGGAGGAGDGHAGDGDAAEEYGPEDLDLLFAAAAEDDMLSTTRARSPPTRYPSPVRSLESYKSVTRQGSDRKQFFTSGTKDVDCLQKEVLKECRNTHQMMKIFRQVLQSAQLSTPDPRAWPESKEAPTLFSGLSKTAKTRRRVKKKPLSSKNKHTKKKKRSYSSSSPSSKDNTSESSNEDSESCSETYSN</sequence>
<feature type="chain" id="PRO_0000315338" description="Probable protein VP2">
    <location>
        <begin position="1"/>
        <end position="280"/>
    </location>
</feature>
<feature type="region of interest" description="Disordered" evidence="2">
    <location>
        <begin position="46"/>
        <end position="167"/>
    </location>
</feature>
<feature type="region of interest" description="Disordered" evidence="2">
    <location>
        <begin position="200"/>
        <end position="280"/>
    </location>
</feature>
<feature type="compositionally biased region" description="Pro residues" evidence="2">
    <location>
        <begin position="65"/>
        <end position="81"/>
    </location>
</feature>
<feature type="compositionally biased region" description="Gly residues" evidence="2">
    <location>
        <begin position="90"/>
        <end position="100"/>
    </location>
</feature>
<feature type="compositionally biased region" description="Acidic residues" evidence="2">
    <location>
        <begin position="106"/>
        <end position="117"/>
    </location>
</feature>
<feature type="compositionally biased region" description="Basic residues" evidence="2">
    <location>
        <begin position="227"/>
        <end position="251"/>
    </location>
</feature>
<feature type="compositionally biased region" description="Low complexity" evidence="2">
    <location>
        <begin position="252"/>
        <end position="266"/>
    </location>
</feature>
<organismHost>
    <name type="scientific">Homo sapiens</name>
    <name type="common">Human</name>
    <dbReference type="NCBI Taxonomy" id="9606"/>
</organismHost>
<evidence type="ECO:0000250" key="1"/>
<evidence type="ECO:0000256" key="2">
    <source>
        <dbReference type="SAM" id="MobiDB-lite"/>
    </source>
</evidence>
<proteinExistence type="inferred from homology"/>
<protein>
    <recommendedName>
        <fullName>Probable protein VP2</fullName>
    </recommendedName>
    <alternativeName>
        <fullName>ORF2/3 protein</fullName>
    </alternativeName>
</protein>
<keyword id="KW-0597">Phosphoprotein</keyword>
<keyword id="KW-1185">Reference proteome</keyword>
<accession>Q8V7J1</accession>
<dbReference type="EMBL" id="AB064595">
    <property type="protein sequence ID" value="BAB79308.1"/>
    <property type="molecule type" value="Genomic_DNA"/>
</dbReference>
<dbReference type="RefSeq" id="YP_003587843.1">
    <property type="nucleotide sequence ID" value="NC_014074.1"/>
</dbReference>
<dbReference type="KEGG" id="vg:9086594"/>
<dbReference type="OrthoDB" id="27758at10239"/>
<dbReference type="Proteomes" id="UP000007551">
    <property type="component" value="Genome"/>
</dbReference>
<dbReference type="InterPro" id="IPR008474">
    <property type="entry name" value="DUF755"/>
</dbReference>
<dbReference type="InterPro" id="IPR004118">
    <property type="entry name" value="HEV_TT_vir_Orf2/Gyrovir_Vp2_N"/>
</dbReference>
<dbReference type="Pfam" id="PF05501">
    <property type="entry name" value="DUF755"/>
    <property type="match status" value="1"/>
</dbReference>
<dbReference type="Pfam" id="PF02957">
    <property type="entry name" value="TT_ORF2-like"/>
    <property type="match status" value="1"/>
</dbReference>
<name>ORF23_TTVV6</name>
<organism>
    <name type="scientific">Torque teno virus (isolate Human/China/CT23F/2001)</name>
    <name type="common">TTV</name>
    <dbReference type="NCBI Taxonomy" id="687366"/>
    <lineage>
        <taxon>Viruses</taxon>
        <taxon>Viruses incertae sedis</taxon>
        <taxon>Anelloviridae</taxon>
        <taxon>Alphatorquevirus</taxon>
    </lineage>
</organism>
<reference key="1">
    <citation type="journal article" date="2002" name="Arch. Virol.">
        <title>Analysis of the entire genomes of thirteen TT virus variants classifiable into the fourth and fifth genetic groups, isolated from viremic infants.</title>
        <authorList>
            <person name="Peng Y.H."/>
            <person name="Nishizawa T."/>
            <person name="Takahashi M."/>
            <person name="Ishikawa T."/>
            <person name="Yoshikawa A."/>
            <person name="Okamoto H."/>
        </authorList>
    </citation>
    <scope>NUCLEOTIDE SEQUENCE [GENOMIC DNA]</scope>
</reference>
<reference key="2">
    <citation type="journal article" date="2007" name="Rev. Med. Virol.">
        <title>Torque teno virus (TTV): current status.</title>
        <authorList>
            <person name="Hino S."/>
            <person name="Miyata H."/>
        </authorList>
    </citation>
    <scope>REVIEW</scope>
</reference>
<gene>
    <name type="ORF">ORF2/3</name>
</gene>